<keyword id="KW-0997">Cell inner membrane</keyword>
<keyword id="KW-1003">Cell membrane</keyword>
<keyword id="KW-0472">Membrane</keyword>
<keyword id="KW-1185">Reference proteome</keyword>
<keyword id="KW-0812">Transmembrane</keyword>
<keyword id="KW-1133">Transmembrane helix</keyword>
<keyword id="KW-0813">Transport</keyword>
<proteinExistence type="inferred from homology"/>
<accession>D8MQN9</accession>
<name>MDTG_ERWBE</name>
<comment type="subcellular location">
    <subcellularLocation>
        <location evidence="1">Cell inner membrane</location>
        <topology evidence="1">Multi-pass membrane protein</topology>
    </subcellularLocation>
</comment>
<comment type="similarity">
    <text evidence="1">Belongs to the major facilitator superfamily. DHA1 family. MdtG (TC 2.A.1.2.20) subfamily.</text>
</comment>
<reference key="1">
    <citation type="journal article" date="2010" name="BMC Genomics">
        <title>Genome comparison of the epiphytic bacteria Erwinia billingiae and E. tasmaniensis with the pear pathogen E. pyrifoliae.</title>
        <authorList>
            <person name="Kube M."/>
            <person name="Migdoll A.M."/>
            <person name="Gehring I."/>
            <person name="Heitmann K."/>
            <person name="Mayer Y."/>
            <person name="Kuhl H."/>
            <person name="Knaust F."/>
            <person name="Geider K."/>
            <person name="Reinhardt R."/>
        </authorList>
    </citation>
    <scope>NUCLEOTIDE SEQUENCE [LARGE SCALE GENOMIC DNA]</scope>
    <source>
        <strain>Eb661</strain>
    </source>
</reference>
<feature type="chain" id="PRO_0000414579" description="Multidrug resistance protein MdtG">
    <location>
        <begin position="1"/>
        <end position="411"/>
    </location>
</feature>
<feature type="transmembrane region" description="Helical" evidence="1">
    <location>
        <begin position="17"/>
        <end position="37"/>
    </location>
</feature>
<feature type="transmembrane region" description="Helical" evidence="1">
    <location>
        <begin position="59"/>
        <end position="79"/>
    </location>
</feature>
<feature type="transmembrane region" description="Helical" evidence="1">
    <location>
        <begin position="92"/>
        <end position="112"/>
    </location>
</feature>
<feature type="transmembrane region" description="Helical" evidence="1">
    <location>
        <begin position="116"/>
        <end position="136"/>
    </location>
</feature>
<feature type="transmembrane region" description="Helical" evidence="1">
    <location>
        <begin position="147"/>
        <end position="167"/>
    </location>
</feature>
<feature type="transmembrane region" description="Helical" evidence="1">
    <location>
        <begin position="174"/>
        <end position="194"/>
    </location>
</feature>
<feature type="transmembrane region" description="Helical" evidence="1">
    <location>
        <begin position="222"/>
        <end position="242"/>
    </location>
</feature>
<feature type="transmembrane region" description="Helical" evidence="1">
    <location>
        <begin position="257"/>
        <end position="277"/>
    </location>
</feature>
<feature type="transmembrane region" description="Helical" evidence="1">
    <location>
        <begin position="291"/>
        <end position="311"/>
    </location>
</feature>
<feature type="transmembrane region" description="Helical" evidence="1">
    <location>
        <begin position="320"/>
        <end position="340"/>
    </location>
</feature>
<feature type="transmembrane region" description="Helical" evidence="1">
    <location>
        <begin position="379"/>
        <end position="399"/>
    </location>
</feature>
<protein>
    <recommendedName>
        <fullName evidence="1">Multidrug resistance protein MdtG</fullName>
    </recommendedName>
</protein>
<evidence type="ECO:0000255" key="1">
    <source>
        <dbReference type="HAMAP-Rule" id="MF_01528"/>
    </source>
</evidence>
<organism>
    <name type="scientific">Erwinia billingiae (strain Eb661)</name>
    <dbReference type="NCBI Taxonomy" id="634500"/>
    <lineage>
        <taxon>Bacteria</taxon>
        <taxon>Pseudomonadati</taxon>
        <taxon>Pseudomonadota</taxon>
        <taxon>Gammaproteobacteria</taxon>
        <taxon>Enterobacterales</taxon>
        <taxon>Erwiniaceae</taxon>
        <taxon>Erwinia</taxon>
    </lineage>
</organism>
<dbReference type="EMBL" id="FP236843">
    <property type="protein sequence ID" value="CAX59146.1"/>
    <property type="molecule type" value="Genomic_DNA"/>
</dbReference>
<dbReference type="RefSeq" id="WP_013201639.1">
    <property type="nucleotide sequence ID" value="NC_014306.1"/>
</dbReference>
<dbReference type="SMR" id="D8MQN9"/>
<dbReference type="STRING" id="634500.EbC_16150"/>
<dbReference type="GeneID" id="90511643"/>
<dbReference type="KEGG" id="ebi:EbC_16150"/>
<dbReference type="eggNOG" id="COG2814">
    <property type="taxonomic scope" value="Bacteria"/>
</dbReference>
<dbReference type="HOGENOM" id="CLU_001265_57_3_6"/>
<dbReference type="Proteomes" id="UP000008793">
    <property type="component" value="Chromosome"/>
</dbReference>
<dbReference type="GO" id="GO:0005886">
    <property type="term" value="C:plasma membrane"/>
    <property type="evidence" value="ECO:0007669"/>
    <property type="project" value="UniProtKB-SubCell"/>
</dbReference>
<dbReference type="GO" id="GO:0022857">
    <property type="term" value="F:transmembrane transporter activity"/>
    <property type="evidence" value="ECO:0007669"/>
    <property type="project" value="UniProtKB-UniRule"/>
</dbReference>
<dbReference type="CDD" id="cd17391">
    <property type="entry name" value="MFS_MdtG_MDR_like"/>
    <property type="match status" value="1"/>
</dbReference>
<dbReference type="FunFam" id="1.20.1250.20:FF:000020">
    <property type="entry name" value="Multidrug resistance protein MdtG"/>
    <property type="match status" value="1"/>
</dbReference>
<dbReference type="FunFam" id="1.20.1250.20:FF:000022">
    <property type="entry name" value="Multidrug resistance protein MdtG"/>
    <property type="match status" value="1"/>
</dbReference>
<dbReference type="Gene3D" id="1.20.1250.20">
    <property type="entry name" value="MFS general substrate transporter like domains"/>
    <property type="match status" value="2"/>
</dbReference>
<dbReference type="HAMAP" id="MF_01528">
    <property type="entry name" value="MFS_MdtG"/>
    <property type="match status" value="1"/>
</dbReference>
<dbReference type="InterPro" id="IPR011701">
    <property type="entry name" value="MFS"/>
</dbReference>
<dbReference type="InterPro" id="IPR020846">
    <property type="entry name" value="MFS_dom"/>
</dbReference>
<dbReference type="InterPro" id="IPR050497">
    <property type="entry name" value="MFS_MdtG_subfamily"/>
</dbReference>
<dbReference type="InterPro" id="IPR005828">
    <property type="entry name" value="MFS_sugar_transport-like"/>
</dbReference>
<dbReference type="InterPro" id="IPR036259">
    <property type="entry name" value="MFS_trans_sf"/>
</dbReference>
<dbReference type="InterPro" id="IPR023692">
    <property type="entry name" value="Mutidrug-R_MdtG"/>
</dbReference>
<dbReference type="InterPro" id="IPR001958">
    <property type="entry name" value="Tet-R_TetA/multi-R_MdtG-like"/>
</dbReference>
<dbReference type="NCBIfam" id="NF007372">
    <property type="entry name" value="PRK09874.1"/>
    <property type="match status" value="1"/>
</dbReference>
<dbReference type="PANTHER" id="PTHR43414">
    <property type="entry name" value="MULTIDRUG RESISTANCE PROTEIN MDTG"/>
    <property type="match status" value="1"/>
</dbReference>
<dbReference type="PANTHER" id="PTHR43414:SF6">
    <property type="entry name" value="MULTIDRUG RESISTANCE PROTEIN MDTG"/>
    <property type="match status" value="1"/>
</dbReference>
<dbReference type="Pfam" id="PF07690">
    <property type="entry name" value="MFS_1"/>
    <property type="match status" value="1"/>
</dbReference>
<dbReference type="Pfam" id="PF00083">
    <property type="entry name" value="Sugar_tr"/>
    <property type="match status" value="1"/>
</dbReference>
<dbReference type="PRINTS" id="PR01035">
    <property type="entry name" value="TCRTETA"/>
</dbReference>
<dbReference type="SUPFAM" id="SSF103473">
    <property type="entry name" value="MFS general substrate transporter"/>
    <property type="match status" value="1"/>
</dbReference>
<dbReference type="PROSITE" id="PS50850">
    <property type="entry name" value="MFS"/>
    <property type="match status" value="1"/>
</dbReference>
<gene>
    <name evidence="1" type="primary">mdtG</name>
    <name type="ordered locus">EbC_16150</name>
</gene>
<sequence>MATADVPLSSINWQKNLFVAWCGCFLTGIAFSLVMPFLPLYVELLGVTDPHSLNMWSGLVFSITFLFSAIASPFWGGLADRKGRKIMLLRSALGMSVVMVLMGLATSIWQFLALRAVLGLLGGFVPNANALIATQVPRNKSGWALGWLSTGAVSGALIGPLIGGLLADSFGLRPVFFITASVLFVCFIMTLFAVREEFVPVQKKDMLHAHQVFTTLKNPRLVLTLFVTTMIIQVATGSIAPILTLYVRDLAGDIQNLAFVSGLIASVPGVAALISAPRLGKLGDRIGPERILVAMLLVSVLLLIPMSMVQNPLQLGILRFLLGAADGALLPAVQTLLIYNASNQVAGRIFSYNQSFRDIGNVTGPLMGAAVSAHWGFRAVFVVTACVVLFNAIYSWITLRRRVDRSSMLDE</sequence>